<name>OMT2B_PAPSO</name>
<accession>A0A2S1WBY6</accession>
<sequence length="356" mass="39163">MEIHLESQEQEMKYQSQIWNQICGTVDTSVLRCAIQLGIFDAIHNSGKPMITLTELSSIVSSPSSSSIEPCNLYRLVRYLSQMDLISIGECLNEATVSLTGTSKLLLRNQEKSLIDWVLAIYCEMMVVVWHELSSSVSTPADEPPIFQKVHGKNALELAGEFPEWNDLINNAMTSDTSVTKPALIQGCGKILNGVTSLIDVGGGHGATMAYIVEAFPHIKGAVIDLPHVVEAAPERPGVEFISGDIFKSISNADAVLLKYVLHNWEDTECVNLLKRCKEAVPADKGKVIIMDLVIDDDDNSILTQAKLSLDLTVMNHGGGRERTKEDWRNLIEMSGFSRHEIIPISAMPSIIVAYP</sequence>
<protein>
    <recommendedName>
        <fullName evidence="7">Probable scoulerine-9-O-methyltransferase OMT2B</fullName>
        <ecNumber evidence="1">2.1.1.117</ecNumber>
    </recommendedName>
    <alternativeName>
        <fullName evidence="7">Inactive 3-O-acetyl-4'-O-demethylpapaveroxine 4'-O-methyltransferase OMT2B</fullName>
    </alternativeName>
    <alternativeName>
        <fullName evidence="6">O-methyltransferase 2b</fullName>
        <shortName evidence="6">OMT2b</shortName>
    </alternativeName>
</protein>
<evidence type="ECO:0000250" key="1">
    <source>
        <dbReference type="UniProtKB" id="I3PLQ6"/>
    </source>
</evidence>
<evidence type="ECO:0000250" key="2">
    <source>
        <dbReference type="UniProtKB" id="I3V6A7"/>
    </source>
</evidence>
<evidence type="ECO:0000250" key="3">
    <source>
        <dbReference type="UniProtKB" id="Q5C9L7"/>
    </source>
</evidence>
<evidence type="ECO:0000255" key="4">
    <source>
        <dbReference type="PROSITE-ProRule" id="PRU01020"/>
    </source>
</evidence>
<evidence type="ECO:0000269" key="5">
    <source>
    </source>
</evidence>
<evidence type="ECO:0000303" key="6">
    <source>
    </source>
</evidence>
<evidence type="ECO:0000305" key="7"/>
<organism>
    <name type="scientific">Papaver somniferum</name>
    <name type="common">Opium poppy</name>
    <dbReference type="NCBI Taxonomy" id="3469"/>
    <lineage>
        <taxon>Eukaryota</taxon>
        <taxon>Viridiplantae</taxon>
        <taxon>Streptophyta</taxon>
        <taxon>Embryophyta</taxon>
        <taxon>Tracheophyta</taxon>
        <taxon>Spermatophyta</taxon>
        <taxon>Magnoliopsida</taxon>
        <taxon>Ranunculales</taxon>
        <taxon>Papaveraceae</taxon>
        <taxon>Papaveroideae</taxon>
        <taxon>Papaver</taxon>
    </lineage>
</organism>
<comment type="function">
    <text evidence="1 5">Methyltransferase involved in the biosynthesis of the benzylisoquinoline alkaloid noscapine (By similarity). Catalyzes the conversion of (S)-scoulerine to (S)-tetrahydrocolumbamine (By similarity). The heterodimers OMT2B-SOMT3 and OMT2B-6OMT do not possess 3-O-acetyl-4'-O-demethylpapaveroxine 4'-O-methyltransferase activity (PubMed:29723437).</text>
</comment>
<comment type="catalytic activity">
    <reaction evidence="1">
        <text>(S)-scoulerine + S-adenosyl-L-methionine = (S)-tetrahydrocolumbamine + S-adenosyl-L-homocysteine + H(+)</text>
        <dbReference type="Rhea" id="RHEA:23808"/>
        <dbReference type="ChEBI" id="CHEBI:15378"/>
        <dbReference type="ChEBI" id="CHEBI:17129"/>
        <dbReference type="ChEBI" id="CHEBI:17772"/>
        <dbReference type="ChEBI" id="CHEBI:57856"/>
        <dbReference type="ChEBI" id="CHEBI:59789"/>
        <dbReference type="EC" id="2.1.1.117"/>
    </reaction>
    <physiologicalReaction direction="left-to-right" evidence="1">
        <dbReference type="Rhea" id="RHEA:23809"/>
    </physiologicalReaction>
</comment>
<comment type="pathway">
    <text evidence="7">Alkaloid biosynthesis.</text>
</comment>
<comment type="polymorphism">
    <text evidence="5">A single amino acid substitution of Ser-122 in cultivar Bea's Choice (AC I3PLQ6) to Tyr-122 in cultivar Marianne (AC A0A2S1WBY6) abolishes the 3-O-acetyl-4'-O-demethylpapaveroxine 4'-O-methyltransferase activity.</text>
</comment>
<comment type="similarity">
    <text evidence="7">Belongs to the class I-like SAM-binding methyltransferase superfamily. Cation-independent O-methyltransferase family. COMT subfamily.</text>
</comment>
<proteinExistence type="evidence at transcript level"/>
<reference key="1">
    <citation type="journal article" date="2018" name="Plant J.">
        <title>Heterodimeric O-methyltransferases involved in the biosynthesis of noscapine in opium poppy.</title>
        <authorList>
            <person name="Park M.R."/>
            <person name="Chen X."/>
            <person name="Lang D.E."/>
            <person name="Ng K.K.S."/>
            <person name="Facchini P.J."/>
        </authorList>
    </citation>
    <scope>NUCLEOTIDE SEQUENCE [MRNA]</scope>
    <scope>FUNCTION</scope>
    <scope>POLYMORPHISM</scope>
    <source>
        <strain>cv. Marianne</strain>
    </source>
</reference>
<feature type="chain" id="PRO_0000447593" description="Probable scoulerine-9-O-methyltransferase OMT2B">
    <location>
        <begin position="1"/>
        <end position="356"/>
    </location>
</feature>
<feature type="active site" description="Proton acceptor" evidence="4">
    <location>
        <position position="263"/>
    </location>
</feature>
<feature type="binding site" evidence="3">
    <location>
        <position position="173"/>
    </location>
    <ligand>
        <name>S-adenosyl-L-methionine</name>
        <dbReference type="ChEBI" id="CHEBI:59789"/>
    </ligand>
</feature>
<feature type="binding site" evidence="3">
    <location>
        <position position="176"/>
    </location>
    <ligand>
        <name>substrate</name>
    </ligand>
</feature>
<feature type="binding site" evidence="3">
    <location>
        <position position="177"/>
    </location>
    <ligand>
        <name>S-adenosyl-L-methionine</name>
        <dbReference type="ChEBI" id="CHEBI:59789"/>
    </ligand>
</feature>
<feature type="binding site" evidence="2">
    <location>
        <position position="202"/>
    </location>
    <ligand>
        <name>S-adenosyl-L-methionine</name>
        <dbReference type="ChEBI" id="CHEBI:59789"/>
    </ligand>
</feature>
<feature type="binding site" evidence="4">
    <location>
        <position position="225"/>
    </location>
    <ligand>
        <name>S-adenosyl-L-methionine</name>
        <dbReference type="ChEBI" id="CHEBI:59789"/>
    </ligand>
</feature>
<feature type="binding site" evidence="2">
    <location>
        <begin position="245"/>
        <end position="246"/>
    </location>
    <ligand>
        <name>S-adenosyl-L-methionine</name>
        <dbReference type="ChEBI" id="CHEBI:59789"/>
    </ligand>
</feature>
<feature type="binding site" evidence="2">
    <location>
        <position position="259"/>
    </location>
    <ligand>
        <name>S-adenosyl-L-methionine</name>
        <dbReference type="ChEBI" id="CHEBI:59789"/>
    </ligand>
</feature>
<feature type="binding site" evidence="3">
    <location>
        <begin position="260"/>
        <end position="264"/>
    </location>
    <ligand>
        <name>substrate</name>
    </ligand>
</feature>
<dbReference type="EC" id="2.1.1.117" evidence="1"/>
<dbReference type="EMBL" id="MH029293">
    <property type="protein sequence ID" value="AWJ64117.1"/>
    <property type="molecule type" value="mRNA"/>
</dbReference>
<dbReference type="SMR" id="A0A2S1WBY6"/>
<dbReference type="GO" id="GO:0030777">
    <property type="term" value="F:(S)-scoulerine 9-O-methyltransferase activity"/>
    <property type="evidence" value="ECO:0007669"/>
    <property type="project" value="UniProtKB-EC"/>
</dbReference>
<dbReference type="GO" id="GO:0008171">
    <property type="term" value="F:O-methyltransferase activity"/>
    <property type="evidence" value="ECO:0007669"/>
    <property type="project" value="InterPro"/>
</dbReference>
<dbReference type="GO" id="GO:0046983">
    <property type="term" value="F:protein dimerization activity"/>
    <property type="evidence" value="ECO:0007669"/>
    <property type="project" value="InterPro"/>
</dbReference>
<dbReference type="GO" id="GO:0009820">
    <property type="term" value="P:alkaloid metabolic process"/>
    <property type="evidence" value="ECO:0007669"/>
    <property type="project" value="UniProtKB-KW"/>
</dbReference>
<dbReference type="GO" id="GO:0032259">
    <property type="term" value="P:methylation"/>
    <property type="evidence" value="ECO:0007669"/>
    <property type="project" value="UniProtKB-KW"/>
</dbReference>
<dbReference type="CDD" id="cd02440">
    <property type="entry name" value="AdoMet_MTases"/>
    <property type="match status" value="1"/>
</dbReference>
<dbReference type="Gene3D" id="3.40.50.150">
    <property type="entry name" value="Vaccinia Virus protein VP39"/>
    <property type="match status" value="1"/>
</dbReference>
<dbReference type="Gene3D" id="1.10.10.10">
    <property type="entry name" value="Winged helix-like DNA-binding domain superfamily/Winged helix DNA-binding domain"/>
    <property type="match status" value="1"/>
</dbReference>
<dbReference type="InterPro" id="IPR016461">
    <property type="entry name" value="COMT-like"/>
</dbReference>
<dbReference type="InterPro" id="IPR001077">
    <property type="entry name" value="O_MeTrfase_dom"/>
</dbReference>
<dbReference type="InterPro" id="IPR012967">
    <property type="entry name" value="Plant_O-MeTrfase_dimerisation"/>
</dbReference>
<dbReference type="InterPro" id="IPR029063">
    <property type="entry name" value="SAM-dependent_MTases_sf"/>
</dbReference>
<dbReference type="InterPro" id="IPR036388">
    <property type="entry name" value="WH-like_DNA-bd_sf"/>
</dbReference>
<dbReference type="InterPro" id="IPR036390">
    <property type="entry name" value="WH_DNA-bd_sf"/>
</dbReference>
<dbReference type="PANTHER" id="PTHR11746">
    <property type="entry name" value="O-METHYLTRANSFERASE"/>
    <property type="match status" value="1"/>
</dbReference>
<dbReference type="Pfam" id="PF08100">
    <property type="entry name" value="Dimerisation"/>
    <property type="match status" value="1"/>
</dbReference>
<dbReference type="Pfam" id="PF00891">
    <property type="entry name" value="Methyltransf_2"/>
    <property type="match status" value="1"/>
</dbReference>
<dbReference type="PIRSF" id="PIRSF005739">
    <property type="entry name" value="O-mtase"/>
    <property type="match status" value="1"/>
</dbReference>
<dbReference type="SUPFAM" id="SSF53335">
    <property type="entry name" value="S-adenosyl-L-methionine-dependent methyltransferases"/>
    <property type="match status" value="1"/>
</dbReference>
<dbReference type="SUPFAM" id="SSF46785">
    <property type="entry name" value="Winged helix' DNA-binding domain"/>
    <property type="match status" value="1"/>
</dbReference>
<dbReference type="PROSITE" id="PS51683">
    <property type="entry name" value="SAM_OMT_II"/>
    <property type="match status" value="1"/>
</dbReference>
<gene>
    <name evidence="6" type="primary">OMT2B</name>
</gene>
<keyword id="KW-0017">Alkaloid metabolism</keyword>
<keyword id="KW-0489">Methyltransferase</keyword>
<keyword id="KW-0949">S-adenosyl-L-methionine</keyword>
<keyword id="KW-0808">Transferase</keyword>